<proteinExistence type="evidence at protein level"/>
<gene>
    <name evidence="6" type="primary">TPS-Phel-4</name>
</gene>
<sequence>MAIVSSVPLASKSCLHKSLISSIHKLKPFCRTIPTLGMSRPGKSVMPSMSMSSPVSDDGVQRRTGGYHSNLWNDDIIQFLSTPYGEPAYRERGERLIDEVKNMFNSISMEDVEFSPLNDLIQRLWIVDSVERLGIDRHFKNEIKSTLDYVYSYWTQKGIGCGIESVVPDLNSTALGLRTLRLHGYPVSAEVLKHFQNQNGQFACSPSETEGEMRSIVNLYRASLIAFPGEKVMEEAEIFSTKYLKEALQKIPVSSLSREIGDVLEQDWHTNLPRLEARNYIDVFGQDTKDTKLYMKTEKLLELAKLEFNIFQSLQKTELDSLLRWWKDSGFHHITFSRHLHVEYYTLASCIAFEPQHSRFRLGFAKACHVITILDDMYDVFGTIDELELFTAQIKRWDPSATDCLPKYMKRMYMILYDMVNEMSREAETAQGRDTLNYARQAWEDFIDSYMQEAKWIATGYLPTFDEYFENGKVSSGHRVAALQPILTMDIPFPHDILKEVDFPSKLNDLASAILRLRGDTRCYKADRARGEEASCISCYMKDNPGATEEDALSHINAVINDVIKGLNWELLNPNSSVPISSKKHVFDVSRALHYGYKYRDGYSVSNIETKSLVMRTLLESVPF</sequence>
<reference key="1">
    <citation type="journal article" date="2011" name="BMC Plant Biol.">
        <title>Transcriptome mining, functional characterization, and phylogeny of a large terpene synthase gene family in spruce (Picea spp.).</title>
        <authorList>
            <person name="Keeling C.I."/>
            <person name="Weisshaar S."/>
            <person name="Ralph S.G."/>
            <person name="Jancsik S."/>
            <person name="Hamberger B."/>
            <person name="Dullat H.K."/>
            <person name="Bohlmann J."/>
        </authorList>
    </citation>
    <scope>NUCLEOTIDE SEQUENCE [MRNA]</scope>
    <scope>CATALYTIC ACTIVITY</scope>
    <scope>FUNCTION</scope>
    <scope>PATHWAY</scope>
    <scope>GENE FAMILY</scope>
    <source>
        <strain>cv. Gb2-229</strain>
    </source>
</reference>
<dbReference type="EC" id="4.2.3.52" evidence="5"/>
<dbReference type="EMBL" id="HQ426159">
    <property type="protein sequence ID" value="ADZ45503.1"/>
    <property type="molecule type" value="mRNA"/>
</dbReference>
<dbReference type="SMR" id="F2XFA1"/>
<dbReference type="UniPathway" id="UPA00924"/>
<dbReference type="GO" id="GO:0009507">
    <property type="term" value="C:chloroplast"/>
    <property type="evidence" value="ECO:0007669"/>
    <property type="project" value="UniProtKB-SubCell"/>
</dbReference>
<dbReference type="GO" id="GO:0016829">
    <property type="term" value="F:lyase activity"/>
    <property type="evidence" value="ECO:0000314"/>
    <property type="project" value="UniProtKB"/>
</dbReference>
<dbReference type="GO" id="GO:0000287">
    <property type="term" value="F:magnesium ion binding"/>
    <property type="evidence" value="ECO:0007669"/>
    <property type="project" value="InterPro"/>
</dbReference>
<dbReference type="GO" id="GO:0010333">
    <property type="term" value="F:terpene synthase activity"/>
    <property type="evidence" value="ECO:0007669"/>
    <property type="project" value="InterPro"/>
</dbReference>
<dbReference type="GO" id="GO:0016102">
    <property type="term" value="P:diterpenoid biosynthetic process"/>
    <property type="evidence" value="ECO:0007669"/>
    <property type="project" value="InterPro"/>
</dbReference>
<dbReference type="GO" id="GO:0010597">
    <property type="term" value="P:green leaf volatile biosynthetic process"/>
    <property type="evidence" value="ECO:0000314"/>
    <property type="project" value="UniProtKB"/>
</dbReference>
<dbReference type="GO" id="GO:0016099">
    <property type="term" value="P:monoterpenoid biosynthetic process"/>
    <property type="evidence" value="ECO:0000314"/>
    <property type="project" value="UniProtKB"/>
</dbReference>
<dbReference type="CDD" id="cd00684">
    <property type="entry name" value="Terpene_cyclase_plant_C1"/>
    <property type="match status" value="1"/>
</dbReference>
<dbReference type="FunFam" id="1.50.10.130:FF:000004">
    <property type="entry name" value="Carene synthase, chloroplastic"/>
    <property type="match status" value="1"/>
</dbReference>
<dbReference type="FunFam" id="1.10.600.10:FF:000005">
    <property type="entry name" value="Ent-kaur-16-ene synthase, chloroplastic"/>
    <property type="match status" value="1"/>
</dbReference>
<dbReference type="Gene3D" id="1.10.600.10">
    <property type="entry name" value="Farnesyl Diphosphate Synthase"/>
    <property type="match status" value="1"/>
</dbReference>
<dbReference type="Gene3D" id="1.50.10.130">
    <property type="entry name" value="Terpene synthase, N-terminal domain"/>
    <property type="match status" value="1"/>
</dbReference>
<dbReference type="InterPro" id="IPR008949">
    <property type="entry name" value="Isoprenoid_synthase_dom_sf"/>
</dbReference>
<dbReference type="InterPro" id="IPR034741">
    <property type="entry name" value="Terpene_cyclase-like_1_C"/>
</dbReference>
<dbReference type="InterPro" id="IPR044814">
    <property type="entry name" value="Terpene_cyclase_plant_C1"/>
</dbReference>
<dbReference type="InterPro" id="IPR001906">
    <property type="entry name" value="Terpene_synth_N"/>
</dbReference>
<dbReference type="InterPro" id="IPR036965">
    <property type="entry name" value="Terpene_synth_N_sf"/>
</dbReference>
<dbReference type="InterPro" id="IPR050148">
    <property type="entry name" value="Terpene_synthase-like"/>
</dbReference>
<dbReference type="InterPro" id="IPR005630">
    <property type="entry name" value="Terpene_synthase_metal-bd"/>
</dbReference>
<dbReference type="InterPro" id="IPR008930">
    <property type="entry name" value="Terpenoid_cyclase/PrenylTrfase"/>
</dbReference>
<dbReference type="PANTHER" id="PTHR31225">
    <property type="entry name" value="OS04G0344100 PROTEIN-RELATED"/>
    <property type="match status" value="1"/>
</dbReference>
<dbReference type="Pfam" id="PF01397">
    <property type="entry name" value="Terpene_synth"/>
    <property type="match status" value="1"/>
</dbReference>
<dbReference type="Pfam" id="PF03936">
    <property type="entry name" value="Terpene_synth_C"/>
    <property type="match status" value="1"/>
</dbReference>
<dbReference type="SFLD" id="SFLDS00005">
    <property type="entry name" value="Isoprenoid_Synthase_Type_I"/>
    <property type="match status" value="1"/>
</dbReference>
<dbReference type="SFLD" id="SFLDG01019">
    <property type="entry name" value="Terpene_Cyclase_Like_1_C_Termi"/>
    <property type="match status" value="1"/>
</dbReference>
<dbReference type="SFLD" id="SFLDG01014">
    <property type="entry name" value="Terpene_Cyclase_Like_1_N-term"/>
    <property type="match status" value="1"/>
</dbReference>
<dbReference type="SUPFAM" id="SSF48239">
    <property type="entry name" value="Terpenoid cyclases/Protein prenyltransferases"/>
    <property type="match status" value="1"/>
</dbReference>
<dbReference type="SUPFAM" id="SSF48576">
    <property type="entry name" value="Terpenoid synthases"/>
    <property type="match status" value="1"/>
</dbReference>
<keyword id="KW-0150">Chloroplast</keyword>
<keyword id="KW-0456">Lyase</keyword>
<keyword id="KW-0460">Magnesium</keyword>
<keyword id="KW-0479">Metal-binding</keyword>
<keyword id="KW-0934">Plastid</keyword>
<keyword id="KW-0809">Transit peptide</keyword>
<accession>F2XFA1</accession>
<organism>
    <name type="scientific">Picea sitchensis</name>
    <name type="common">Sitka spruce</name>
    <name type="synonym">Pinus sitchensis</name>
    <dbReference type="NCBI Taxonomy" id="3332"/>
    <lineage>
        <taxon>Eukaryota</taxon>
        <taxon>Viridiplantae</taxon>
        <taxon>Streptophyta</taxon>
        <taxon>Embryophyta</taxon>
        <taxon>Tracheophyta</taxon>
        <taxon>Spermatophyta</taxon>
        <taxon>Pinopsida</taxon>
        <taxon>Pinidae</taxon>
        <taxon>Conifers I</taxon>
        <taxon>Pinales</taxon>
        <taxon>Pinaceae</taxon>
        <taxon>Picea</taxon>
    </lineage>
</organism>
<protein>
    <recommendedName>
        <fullName evidence="6">(-)-beta-phellandrene synthase 4, chloroplastic</fullName>
        <ecNumber evidence="5">4.2.3.52</ecNumber>
    </recommendedName>
    <alternativeName>
        <fullName evidence="6">Terpene synthase TPS-Phel-4</fullName>
        <shortName evidence="6">PsTPS-Phel-4</shortName>
    </alternativeName>
</protein>
<evidence type="ECO:0000250" key="1">
    <source>
        <dbReference type="UniProtKB" id="A0A1C9J6A7"/>
    </source>
</evidence>
<evidence type="ECO:0000250" key="2">
    <source>
        <dbReference type="UniProtKB" id="Q40577"/>
    </source>
</evidence>
<evidence type="ECO:0000255" key="3"/>
<evidence type="ECO:0000256" key="4">
    <source>
        <dbReference type="SAM" id="MobiDB-lite"/>
    </source>
</evidence>
<evidence type="ECO:0000269" key="5">
    <source>
    </source>
</evidence>
<evidence type="ECO:0000303" key="6">
    <source>
    </source>
</evidence>
<evidence type="ECO:0000305" key="7"/>
<name>BPHS4_PICSI</name>
<feature type="transit peptide" description="Chloroplast" evidence="3">
    <location>
        <begin position="1"/>
        <end position="48"/>
    </location>
</feature>
<feature type="chain" id="PRO_0000454407" description="(-)-beta-phellandrene synthase 4, chloroplastic">
    <location>
        <begin position="49"/>
        <end position="624"/>
    </location>
</feature>
<feature type="region of interest" description="Disordered" evidence="4">
    <location>
        <begin position="41"/>
        <end position="60"/>
    </location>
</feature>
<feature type="short sequence motif" description="DDXXD motif" evidence="1">
    <location>
        <begin position="375"/>
        <end position="379"/>
    </location>
</feature>
<feature type="compositionally biased region" description="Low complexity" evidence="4">
    <location>
        <begin position="44"/>
        <end position="56"/>
    </location>
</feature>
<feature type="binding site" evidence="2">
    <location>
        <position position="375"/>
    </location>
    <ligand>
        <name>Mg(2+)</name>
        <dbReference type="ChEBI" id="CHEBI:18420"/>
        <label>1</label>
    </ligand>
</feature>
<feature type="binding site" evidence="2">
    <location>
        <position position="375"/>
    </location>
    <ligand>
        <name>Mg(2+)</name>
        <dbReference type="ChEBI" id="CHEBI:18420"/>
        <label>2</label>
    </ligand>
</feature>
<feature type="binding site" evidence="2">
    <location>
        <position position="379"/>
    </location>
    <ligand>
        <name>Mg(2+)</name>
        <dbReference type="ChEBI" id="CHEBI:18420"/>
        <label>1</label>
    </ligand>
</feature>
<feature type="binding site" evidence="2">
    <location>
        <position position="379"/>
    </location>
    <ligand>
        <name>Mg(2+)</name>
        <dbReference type="ChEBI" id="CHEBI:18420"/>
        <label>2</label>
    </ligand>
</feature>
<feature type="binding site" evidence="2">
    <location>
        <position position="527"/>
    </location>
    <ligand>
        <name>Mg(2+)</name>
        <dbReference type="ChEBI" id="CHEBI:18420"/>
        <label>3</label>
    </ligand>
</feature>
<comment type="function">
    <text evidence="5">Terpene synthase (TPS) involved in the biosynthesis of monoterpene natural products included in conifer oleoresin secretions and volatile emissions; these compounds contribute to biotic and abiotic stress defense against herbivores and pathogens (PubMed:21385377). Catalyzes the conversion of (2E)-geranyl diphosphate (GPP) to (-)-beta-phellandrene (PubMed:21385377).</text>
</comment>
<comment type="catalytic activity">
    <reaction evidence="5">
        <text>(2E)-geranyl diphosphate = (-)-beta-phellandrene + diphosphate</text>
        <dbReference type="Rhea" id="RHEA:25492"/>
        <dbReference type="ChEBI" id="CHEBI:129"/>
        <dbReference type="ChEBI" id="CHEBI:33019"/>
        <dbReference type="ChEBI" id="CHEBI:58057"/>
        <dbReference type="EC" id="4.2.3.52"/>
    </reaction>
</comment>
<comment type="cofactor">
    <cofactor evidence="1">
        <name>Mg(2+)</name>
        <dbReference type="ChEBI" id="CHEBI:18420"/>
    </cofactor>
    <cofactor evidence="1">
        <name>Mn(2+)</name>
        <dbReference type="ChEBI" id="CHEBI:29035"/>
    </cofactor>
    <text evidence="1">Binds 3 Mg(2+) or Mn(2+) ions per subunit.</text>
</comment>
<comment type="pathway">
    <text evidence="5">Terpene metabolism; oleoresin biosynthesis.</text>
</comment>
<comment type="subcellular location">
    <subcellularLocation>
        <location evidence="3">Plastid</location>
        <location evidence="3">Chloroplast</location>
    </subcellularLocation>
</comment>
<comment type="domain">
    <text evidence="1">The Asp-Asp-Xaa-Xaa-Asp/Glu (DDXXD/E) motif is important for the catalytic activity, presumably through binding to Mg(2+).</text>
</comment>
<comment type="similarity">
    <text evidence="7">Belongs to the terpene synthase family. Tpsd subfamily.</text>
</comment>